<keyword id="KW-0067">ATP-binding</keyword>
<keyword id="KW-0378">Hydrolase</keyword>
<keyword id="KW-0547">Nucleotide-binding</keyword>
<keyword id="KW-1185">Reference proteome</keyword>
<proteinExistence type="inferred from homology"/>
<name>PXPA_CARHZ</name>
<accession>Q3A9E0</accession>
<dbReference type="EC" id="3.5.2.9" evidence="1"/>
<dbReference type="EMBL" id="CP000141">
    <property type="protein sequence ID" value="ABB14508.1"/>
    <property type="molecule type" value="Genomic_DNA"/>
</dbReference>
<dbReference type="RefSeq" id="WP_011345317.1">
    <property type="nucleotide sequence ID" value="NC_007503.1"/>
</dbReference>
<dbReference type="SMR" id="Q3A9E0"/>
<dbReference type="FunCoup" id="Q3A9E0">
    <property type="interactions" value="17"/>
</dbReference>
<dbReference type="STRING" id="246194.CHY_2450"/>
<dbReference type="KEGG" id="chy:CHY_2450"/>
<dbReference type="eggNOG" id="COG1540">
    <property type="taxonomic scope" value="Bacteria"/>
</dbReference>
<dbReference type="HOGENOM" id="CLU_069535_0_0_9"/>
<dbReference type="InParanoid" id="Q3A9E0"/>
<dbReference type="OrthoDB" id="9773478at2"/>
<dbReference type="Proteomes" id="UP000002706">
    <property type="component" value="Chromosome"/>
</dbReference>
<dbReference type="GO" id="GO:0017168">
    <property type="term" value="F:5-oxoprolinase (ATP-hydrolyzing) activity"/>
    <property type="evidence" value="ECO:0007669"/>
    <property type="project" value="UniProtKB-UniRule"/>
</dbReference>
<dbReference type="GO" id="GO:0005524">
    <property type="term" value="F:ATP binding"/>
    <property type="evidence" value="ECO:0007669"/>
    <property type="project" value="UniProtKB-UniRule"/>
</dbReference>
<dbReference type="GO" id="GO:0005975">
    <property type="term" value="P:carbohydrate metabolic process"/>
    <property type="evidence" value="ECO:0007669"/>
    <property type="project" value="InterPro"/>
</dbReference>
<dbReference type="CDD" id="cd10787">
    <property type="entry name" value="LamB_YcsF_like"/>
    <property type="match status" value="1"/>
</dbReference>
<dbReference type="Gene3D" id="3.20.20.370">
    <property type="entry name" value="Glycoside hydrolase/deacetylase"/>
    <property type="match status" value="1"/>
</dbReference>
<dbReference type="HAMAP" id="MF_00691">
    <property type="entry name" value="PxpA"/>
    <property type="match status" value="1"/>
</dbReference>
<dbReference type="InterPro" id="IPR011330">
    <property type="entry name" value="Glyco_hydro/deAcase_b/a-brl"/>
</dbReference>
<dbReference type="InterPro" id="IPR005501">
    <property type="entry name" value="LamB/YcsF/PxpA-like"/>
</dbReference>
<dbReference type="NCBIfam" id="NF003814">
    <property type="entry name" value="PRK05406.1-3"/>
    <property type="match status" value="1"/>
</dbReference>
<dbReference type="NCBIfam" id="NF003816">
    <property type="entry name" value="PRK05406.1-5"/>
    <property type="match status" value="1"/>
</dbReference>
<dbReference type="PANTHER" id="PTHR30292:SF0">
    <property type="entry name" value="5-OXOPROLINASE SUBUNIT A"/>
    <property type="match status" value="1"/>
</dbReference>
<dbReference type="PANTHER" id="PTHR30292">
    <property type="entry name" value="UNCHARACTERIZED PROTEIN YBGL-RELATED"/>
    <property type="match status" value="1"/>
</dbReference>
<dbReference type="Pfam" id="PF03746">
    <property type="entry name" value="LamB_YcsF"/>
    <property type="match status" value="1"/>
</dbReference>
<dbReference type="SUPFAM" id="SSF88713">
    <property type="entry name" value="Glycoside hydrolase/deacetylase"/>
    <property type="match status" value="1"/>
</dbReference>
<sequence length="254" mass="27813">MKYIDLNADIGESYGNFKVGEDEAILPLVSSINVACGFHAGDFMVMAECCKLAREYGVNLGAHPGYPDLWGFGRRSIPYTKEEITNMLLYQLGALSAFARAEGVKITHVKPHGALYNDAVVKVEVAEAVARAVWVFDAEIAIVTLPYGRLFEIASEMGLTVIREGFADRGYLPDGRLVPRNQEGAKKTGDEAVAQAIALAEGWVKAVDGTVIKAEVDTICVHGDNIEAVKLAQKINRELLNKNIYVQAWRKKRA</sequence>
<feature type="chain" id="PRO_1000200452" description="5-oxoprolinase subunit A">
    <location>
        <begin position="1"/>
        <end position="254"/>
    </location>
</feature>
<protein>
    <recommendedName>
        <fullName evidence="1">5-oxoprolinase subunit A</fullName>
        <shortName evidence="1">5-OPase subunit A</shortName>
        <ecNumber evidence="1">3.5.2.9</ecNumber>
    </recommendedName>
    <alternativeName>
        <fullName evidence="1">5-oxoprolinase (ATP-hydrolyzing) subunit A</fullName>
    </alternativeName>
</protein>
<organism>
    <name type="scientific">Carboxydothermus hydrogenoformans (strain ATCC BAA-161 / DSM 6008 / Z-2901)</name>
    <dbReference type="NCBI Taxonomy" id="246194"/>
    <lineage>
        <taxon>Bacteria</taxon>
        <taxon>Bacillati</taxon>
        <taxon>Bacillota</taxon>
        <taxon>Clostridia</taxon>
        <taxon>Thermoanaerobacterales</taxon>
        <taxon>Thermoanaerobacteraceae</taxon>
        <taxon>Carboxydothermus</taxon>
    </lineage>
</organism>
<gene>
    <name evidence="1" type="primary">pxpA</name>
    <name type="ordered locus">CHY_2450</name>
</gene>
<evidence type="ECO:0000255" key="1">
    <source>
        <dbReference type="HAMAP-Rule" id="MF_00691"/>
    </source>
</evidence>
<reference key="1">
    <citation type="journal article" date="2005" name="PLoS Genet.">
        <title>Life in hot carbon monoxide: the complete genome sequence of Carboxydothermus hydrogenoformans Z-2901.</title>
        <authorList>
            <person name="Wu M."/>
            <person name="Ren Q."/>
            <person name="Durkin A.S."/>
            <person name="Daugherty S.C."/>
            <person name="Brinkac L.M."/>
            <person name="Dodson R.J."/>
            <person name="Madupu R."/>
            <person name="Sullivan S.A."/>
            <person name="Kolonay J.F."/>
            <person name="Nelson W.C."/>
            <person name="Tallon L.J."/>
            <person name="Jones K.M."/>
            <person name="Ulrich L.E."/>
            <person name="Gonzalez J.M."/>
            <person name="Zhulin I.B."/>
            <person name="Robb F.T."/>
            <person name="Eisen J.A."/>
        </authorList>
    </citation>
    <scope>NUCLEOTIDE SEQUENCE [LARGE SCALE GENOMIC DNA]</scope>
    <source>
        <strain>ATCC BAA-161 / DSM 6008 / Z-2901</strain>
    </source>
</reference>
<comment type="function">
    <text evidence="1">Catalyzes the cleavage of 5-oxoproline to form L-glutamate coupled to the hydrolysis of ATP to ADP and inorganic phosphate.</text>
</comment>
<comment type="catalytic activity">
    <reaction evidence="1">
        <text>5-oxo-L-proline + ATP + 2 H2O = L-glutamate + ADP + phosphate + H(+)</text>
        <dbReference type="Rhea" id="RHEA:10348"/>
        <dbReference type="ChEBI" id="CHEBI:15377"/>
        <dbReference type="ChEBI" id="CHEBI:15378"/>
        <dbReference type="ChEBI" id="CHEBI:29985"/>
        <dbReference type="ChEBI" id="CHEBI:30616"/>
        <dbReference type="ChEBI" id="CHEBI:43474"/>
        <dbReference type="ChEBI" id="CHEBI:58402"/>
        <dbReference type="ChEBI" id="CHEBI:456216"/>
        <dbReference type="EC" id="3.5.2.9"/>
    </reaction>
</comment>
<comment type="subunit">
    <text evidence="1">Forms a complex composed of PxpA, PxpB and PxpC.</text>
</comment>
<comment type="similarity">
    <text evidence="1">Belongs to the LamB/PxpA family.</text>
</comment>